<keyword id="KW-0687">Ribonucleoprotein</keyword>
<keyword id="KW-0689">Ribosomal protein</keyword>
<keyword id="KW-0694">RNA-binding</keyword>
<keyword id="KW-0699">rRNA-binding</keyword>
<organism>
    <name type="scientific">Brucella melitensis biotype 1 (strain ATCC 23456 / CCUG 17765 / NCTC 10094 / 16M)</name>
    <dbReference type="NCBI Taxonomy" id="224914"/>
    <lineage>
        <taxon>Bacteria</taxon>
        <taxon>Pseudomonadati</taxon>
        <taxon>Pseudomonadota</taxon>
        <taxon>Alphaproteobacteria</taxon>
        <taxon>Hyphomicrobiales</taxon>
        <taxon>Brucellaceae</taxon>
        <taxon>Brucella/Ochrobactrum group</taxon>
        <taxon>Brucella</taxon>
    </lineage>
</organism>
<accession>P66101</accession>
<accession>Q8YE71</accession>
<name>RL20_BRUME</name>
<sequence length="134" mass="15095">MARVKRGVTAHAKHKKVLDQAAGFRGRRKNTIRTAKAAVDRSKQYAYRDRKNRKRSFRALWIQRINAAVREQGLTYGRFIDGLAKAGIEIDRKVLSDIAIHEPEAFAALVASAKKALEYLKNTSMPNAFEGAVR</sequence>
<evidence type="ECO:0000255" key="1">
    <source>
        <dbReference type="HAMAP-Rule" id="MF_00382"/>
    </source>
</evidence>
<evidence type="ECO:0000305" key="2"/>
<comment type="function">
    <text evidence="1">Binds directly to 23S ribosomal RNA and is necessary for the in vitro assembly process of the 50S ribosomal subunit. It is not involved in the protein synthesizing functions of that subunit.</text>
</comment>
<comment type="similarity">
    <text evidence="1">Belongs to the bacterial ribosomal protein bL20 family.</text>
</comment>
<gene>
    <name evidence="1" type="primary">rplT</name>
    <name type="ordered locus">BMEI2007</name>
</gene>
<reference key="1">
    <citation type="journal article" date="2002" name="Proc. Natl. Acad. Sci. U.S.A.">
        <title>The genome sequence of the facultative intracellular pathogen Brucella melitensis.</title>
        <authorList>
            <person name="DelVecchio V.G."/>
            <person name="Kapatral V."/>
            <person name="Redkar R.J."/>
            <person name="Patra G."/>
            <person name="Mujer C."/>
            <person name="Los T."/>
            <person name="Ivanova N."/>
            <person name="Anderson I."/>
            <person name="Bhattacharyya A."/>
            <person name="Lykidis A."/>
            <person name="Reznik G."/>
            <person name="Jablonski L."/>
            <person name="Larsen N."/>
            <person name="D'Souza M."/>
            <person name="Bernal A."/>
            <person name="Mazur M."/>
            <person name="Goltsman E."/>
            <person name="Selkov E."/>
            <person name="Elzer P.H."/>
            <person name="Hagius S."/>
            <person name="O'Callaghan D."/>
            <person name="Letesson J.-J."/>
            <person name="Haselkorn R."/>
            <person name="Kyrpides N.C."/>
            <person name="Overbeek R."/>
        </authorList>
    </citation>
    <scope>NUCLEOTIDE SEQUENCE [LARGE SCALE GENOMIC DNA]</scope>
    <source>
        <strain>ATCC 23456 / CCUG 17765 / NCTC 10094 / 16M</strain>
    </source>
</reference>
<protein>
    <recommendedName>
        <fullName evidence="1">Large ribosomal subunit protein bL20</fullName>
    </recommendedName>
    <alternativeName>
        <fullName evidence="2">50S ribosomal protein L20</fullName>
    </alternativeName>
</protein>
<feature type="chain" id="PRO_0000177130" description="Large ribosomal subunit protein bL20">
    <location>
        <begin position="1"/>
        <end position="134"/>
    </location>
</feature>
<proteinExistence type="inferred from homology"/>
<dbReference type="EMBL" id="AE008917">
    <property type="protein sequence ID" value="AAL53188.1"/>
    <property type="molecule type" value="Genomic_DNA"/>
</dbReference>
<dbReference type="PIR" id="AI3502">
    <property type="entry name" value="AI3502"/>
</dbReference>
<dbReference type="RefSeq" id="WP_002965185.1">
    <property type="nucleotide sequence ID" value="NZ_GG703778.1"/>
</dbReference>
<dbReference type="SMR" id="P66101"/>
<dbReference type="GeneID" id="97534622"/>
<dbReference type="KEGG" id="bme:BMEI2007"/>
<dbReference type="KEGG" id="bmel:DK63_1484"/>
<dbReference type="PATRIC" id="fig|224914.52.peg.1564"/>
<dbReference type="eggNOG" id="COG0292">
    <property type="taxonomic scope" value="Bacteria"/>
</dbReference>
<dbReference type="PhylomeDB" id="P66101"/>
<dbReference type="Proteomes" id="UP000000419">
    <property type="component" value="Chromosome I"/>
</dbReference>
<dbReference type="GO" id="GO:1990904">
    <property type="term" value="C:ribonucleoprotein complex"/>
    <property type="evidence" value="ECO:0007669"/>
    <property type="project" value="UniProtKB-KW"/>
</dbReference>
<dbReference type="GO" id="GO:0005840">
    <property type="term" value="C:ribosome"/>
    <property type="evidence" value="ECO:0007669"/>
    <property type="project" value="UniProtKB-KW"/>
</dbReference>
<dbReference type="GO" id="GO:0019843">
    <property type="term" value="F:rRNA binding"/>
    <property type="evidence" value="ECO:0007669"/>
    <property type="project" value="UniProtKB-UniRule"/>
</dbReference>
<dbReference type="GO" id="GO:0003735">
    <property type="term" value="F:structural constituent of ribosome"/>
    <property type="evidence" value="ECO:0007669"/>
    <property type="project" value="InterPro"/>
</dbReference>
<dbReference type="GO" id="GO:0000027">
    <property type="term" value="P:ribosomal large subunit assembly"/>
    <property type="evidence" value="ECO:0007669"/>
    <property type="project" value="UniProtKB-UniRule"/>
</dbReference>
<dbReference type="GO" id="GO:0006412">
    <property type="term" value="P:translation"/>
    <property type="evidence" value="ECO:0007669"/>
    <property type="project" value="InterPro"/>
</dbReference>
<dbReference type="CDD" id="cd07026">
    <property type="entry name" value="Ribosomal_L20"/>
    <property type="match status" value="1"/>
</dbReference>
<dbReference type="FunFam" id="1.10.1900.20:FF:000001">
    <property type="entry name" value="50S ribosomal protein L20"/>
    <property type="match status" value="1"/>
</dbReference>
<dbReference type="Gene3D" id="6.10.160.10">
    <property type="match status" value="1"/>
</dbReference>
<dbReference type="Gene3D" id="1.10.1900.20">
    <property type="entry name" value="Ribosomal protein L20"/>
    <property type="match status" value="1"/>
</dbReference>
<dbReference type="HAMAP" id="MF_00382">
    <property type="entry name" value="Ribosomal_bL20"/>
    <property type="match status" value="1"/>
</dbReference>
<dbReference type="InterPro" id="IPR005813">
    <property type="entry name" value="Ribosomal_bL20"/>
</dbReference>
<dbReference type="InterPro" id="IPR049946">
    <property type="entry name" value="RIBOSOMAL_L20_CS"/>
</dbReference>
<dbReference type="InterPro" id="IPR035566">
    <property type="entry name" value="Ribosomal_protein_bL20_C"/>
</dbReference>
<dbReference type="NCBIfam" id="TIGR01032">
    <property type="entry name" value="rplT_bact"/>
    <property type="match status" value="1"/>
</dbReference>
<dbReference type="PANTHER" id="PTHR10986">
    <property type="entry name" value="39S RIBOSOMAL PROTEIN L20"/>
    <property type="match status" value="1"/>
</dbReference>
<dbReference type="Pfam" id="PF00453">
    <property type="entry name" value="Ribosomal_L20"/>
    <property type="match status" value="1"/>
</dbReference>
<dbReference type="PRINTS" id="PR00062">
    <property type="entry name" value="RIBOSOMALL20"/>
</dbReference>
<dbReference type="SUPFAM" id="SSF74731">
    <property type="entry name" value="Ribosomal protein L20"/>
    <property type="match status" value="1"/>
</dbReference>
<dbReference type="PROSITE" id="PS00937">
    <property type="entry name" value="RIBOSOMAL_L20"/>
    <property type="match status" value="1"/>
</dbReference>